<gene>
    <name evidence="1" type="primary">coaE</name>
    <name type="ordered locus">CT_492</name>
</gene>
<comment type="function">
    <text evidence="1">Catalyzes the phosphorylation of the 3'-hydroxyl group of dephosphocoenzyme A to form coenzyme A.</text>
</comment>
<comment type="catalytic activity">
    <reaction evidence="1">
        <text>3'-dephospho-CoA + ATP = ADP + CoA + H(+)</text>
        <dbReference type="Rhea" id="RHEA:18245"/>
        <dbReference type="ChEBI" id="CHEBI:15378"/>
        <dbReference type="ChEBI" id="CHEBI:30616"/>
        <dbReference type="ChEBI" id="CHEBI:57287"/>
        <dbReference type="ChEBI" id="CHEBI:57328"/>
        <dbReference type="ChEBI" id="CHEBI:456216"/>
        <dbReference type="EC" id="2.7.1.24"/>
    </reaction>
</comment>
<comment type="pathway">
    <text evidence="1">Cofactor biosynthesis; coenzyme A biosynthesis; CoA from (R)-pantothenate: step 5/5.</text>
</comment>
<comment type="subcellular location">
    <subcellularLocation>
        <location evidence="1">Cytoplasm</location>
    </subcellularLocation>
</comment>
<comment type="similarity">
    <text evidence="1 2">Belongs to the CoaE family.</text>
</comment>
<reference key="1">
    <citation type="journal article" date="1998" name="Science">
        <title>Genome sequence of an obligate intracellular pathogen of humans: Chlamydia trachomatis.</title>
        <authorList>
            <person name="Stephens R.S."/>
            <person name="Kalman S."/>
            <person name="Lammel C.J."/>
            <person name="Fan J."/>
            <person name="Marathe R."/>
            <person name="Aravind L."/>
            <person name="Mitchell W.P."/>
            <person name="Olinger L."/>
            <person name="Tatusov R.L."/>
            <person name="Zhao Q."/>
            <person name="Koonin E.V."/>
            <person name="Davis R.W."/>
        </authorList>
    </citation>
    <scope>NUCLEOTIDE SEQUENCE [LARGE SCALE GENOMIC DNA]</scope>
    <source>
        <strain>ATCC VR-885 / DSM 19411 / UW-3/Cx</strain>
    </source>
</reference>
<keyword id="KW-0067">ATP-binding</keyword>
<keyword id="KW-0173">Coenzyme A biosynthesis</keyword>
<keyword id="KW-0963">Cytoplasm</keyword>
<keyword id="KW-0418">Kinase</keyword>
<keyword id="KW-0547">Nucleotide-binding</keyword>
<keyword id="KW-1185">Reference proteome</keyword>
<keyword id="KW-0808">Transferase</keyword>
<proteinExistence type="inferred from homology"/>
<feature type="chain" id="PRO_0000172928" description="Dephospho-CoA kinase">
    <location>
        <begin position="1"/>
        <end position="202"/>
    </location>
</feature>
<feature type="domain" description="DPCK" evidence="1">
    <location>
        <begin position="6"/>
        <end position="202"/>
    </location>
</feature>
<feature type="binding site" evidence="1">
    <location>
        <begin position="14"/>
        <end position="19"/>
    </location>
    <ligand>
        <name>ATP</name>
        <dbReference type="ChEBI" id="CHEBI:30616"/>
    </ligand>
</feature>
<organism>
    <name type="scientific">Chlamydia trachomatis serovar D (strain ATCC VR-885 / DSM 19411 / UW-3/Cx)</name>
    <dbReference type="NCBI Taxonomy" id="272561"/>
    <lineage>
        <taxon>Bacteria</taxon>
        <taxon>Pseudomonadati</taxon>
        <taxon>Chlamydiota</taxon>
        <taxon>Chlamydiia</taxon>
        <taxon>Chlamydiales</taxon>
        <taxon>Chlamydiaceae</taxon>
        <taxon>Chlamydia/Chlamydophila group</taxon>
        <taxon>Chlamydia</taxon>
    </lineage>
</organism>
<protein>
    <recommendedName>
        <fullName evidence="1">Dephospho-CoA kinase</fullName>
        <ecNumber evidence="1">2.7.1.24</ecNumber>
    </recommendedName>
    <alternativeName>
        <fullName evidence="1">Dephosphocoenzyme A kinase</fullName>
    </alternativeName>
</protein>
<sequence>MLDLLKISVTGDPSSGKTEACQVFEDLGAYVISADKVSHSFLVPYTSVGQRIIDLLGPEIIIENTLSRKAIAEKVFGNRDLLLSLEEILHPEVCRFVEEKYAHVVQEQKYPLFIAEFPLLYEIQYADWFDQVILISADTGIRKERFLKKTGGSDTSFDLRCARFSSLEEKILRADVVIENNGTKEEFRRKVKQCFKALKGTI</sequence>
<name>COAE_CHLTR</name>
<evidence type="ECO:0000255" key="1">
    <source>
        <dbReference type="HAMAP-Rule" id="MF_00376"/>
    </source>
</evidence>
<evidence type="ECO:0000305" key="2"/>
<accession>O84499</accession>
<dbReference type="EC" id="2.7.1.24" evidence="1"/>
<dbReference type="EMBL" id="AE001273">
    <property type="protein sequence ID" value="AAC68092.1"/>
    <property type="molecule type" value="Genomic_DNA"/>
</dbReference>
<dbReference type="PIR" id="B71509">
    <property type="entry name" value="B71509"/>
</dbReference>
<dbReference type="RefSeq" id="WP_009871854.1">
    <property type="nucleotide sequence ID" value="NC_000117.1"/>
</dbReference>
<dbReference type="SMR" id="O84499"/>
<dbReference type="FunCoup" id="O84499">
    <property type="interactions" value="220"/>
</dbReference>
<dbReference type="STRING" id="272561.CT_492"/>
<dbReference type="EnsemblBacteria" id="AAC68092">
    <property type="protein sequence ID" value="AAC68092"/>
    <property type="gene ID" value="CT_492"/>
</dbReference>
<dbReference type="KEGG" id="ctr:CT_492"/>
<dbReference type="PATRIC" id="fig|272561.5.peg.535"/>
<dbReference type="HOGENOM" id="CLU_057180_3_1_0"/>
<dbReference type="InParanoid" id="O84499"/>
<dbReference type="OrthoDB" id="17745at2"/>
<dbReference type="UniPathway" id="UPA00241">
    <property type="reaction ID" value="UER00356"/>
</dbReference>
<dbReference type="Proteomes" id="UP000000431">
    <property type="component" value="Chromosome"/>
</dbReference>
<dbReference type="GO" id="GO:0005737">
    <property type="term" value="C:cytoplasm"/>
    <property type="evidence" value="ECO:0007669"/>
    <property type="project" value="UniProtKB-SubCell"/>
</dbReference>
<dbReference type="GO" id="GO:0005524">
    <property type="term" value="F:ATP binding"/>
    <property type="evidence" value="ECO:0007669"/>
    <property type="project" value="UniProtKB-UniRule"/>
</dbReference>
<dbReference type="GO" id="GO:0004140">
    <property type="term" value="F:dephospho-CoA kinase activity"/>
    <property type="evidence" value="ECO:0000318"/>
    <property type="project" value="GO_Central"/>
</dbReference>
<dbReference type="GO" id="GO:0015937">
    <property type="term" value="P:coenzyme A biosynthetic process"/>
    <property type="evidence" value="ECO:0000318"/>
    <property type="project" value="GO_Central"/>
</dbReference>
<dbReference type="CDD" id="cd02022">
    <property type="entry name" value="DPCK"/>
    <property type="match status" value="1"/>
</dbReference>
<dbReference type="Gene3D" id="3.40.50.300">
    <property type="entry name" value="P-loop containing nucleotide triphosphate hydrolases"/>
    <property type="match status" value="1"/>
</dbReference>
<dbReference type="HAMAP" id="MF_00376">
    <property type="entry name" value="Dephospho_CoA_kinase"/>
    <property type="match status" value="1"/>
</dbReference>
<dbReference type="InterPro" id="IPR001977">
    <property type="entry name" value="Depp_CoAkinase"/>
</dbReference>
<dbReference type="InterPro" id="IPR027417">
    <property type="entry name" value="P-loop_NTPase"/>
</dbReference>
<dbReference type="NCBIfam" id="TIGR00152">
    <property type="entry name" value="dephospho-CoA kinase"/>
    <property type="match status" value="1"/>
</dbReference>
<dbReference type="PANTHER" id="PTHR10695:SF46">
    <property type="entry name" value="BIFUNCTIONAL COENZYME A SYNTHASE-RELATED"/>
    <property type="match status" value="1"/>
</dbReference>
<dbReference type="PANTHER" id="PTHR10695">
    <property type="entry name" value="DEPHOSPHO-COA KINASE-RELATED"/>
    <property type="match status" value="1"/>
</dbReference>
<dbReference type="Pfam" id="PF01121">
    <property type="entry name" value="CoaE"/>
    <property type="match status" value="1"/>
</dbReference>
<dbReference type="SUPFAM" id="SSF52540">
    <property type="entry name" value="P-loop containing nucleoside triphosphate hydrolases"/>
    <property type="match status" value="1"/>
</dbReference>
<dbReference type="PROSITE" id="PS51219">
    <property type="entry name" value="DPCK"/>
    <property type="match status" value="1"/>
</dbReference>